<organism>
    <name type="scientific">Debaryomyces hansenii (strain ATCC 36239 / CBS 767 / BCRC 21394 / JCM 1990 / NBRC 0083 / IGC 2968)</name>
    <name type="common">Yeast</name>
    <name type="synonym">Torulaspora hansenii</name>
    <dbReference type="NCBI Taxonomy" id="284592"/>
    <lineage>
        <taxon>Eukaryota</taxon>
        <taxon>Fungi</taxon>
        <taxon>Dikarya</taxon>
        <taxon>Ascomycota</taxon>
        <taxon>Saccharomycotina</taxon>
        <taxon>Pichiomycetes</taxon>
        <taxon>Debaryomycetaceae</taxon>
        <taxon>Debaryomyces</taxon>
    </lineage>
</organism>
<keyword id="KW-0072">Autophagy</keyword>
<keyword id="KW-0175">Coiled coil</keyword>
<keyword id="KW-0472">Membrane</keyword>
<keyword id="KW-0653">Protein transport</keyword>
<keyword id="KW-1185">Reference proteome</keyword>
<keyword id="KW-0813">Transport</keyword>
<evidence type="ECO:0000250" key="1"/>
<evidence type="ECO:0000250" key="2">
    <source>
        <dbReference type="UniProtKB" id="Q03818"/>
    </source>
</evidence>
<evidence type="ECO:0000255" key="3"/>
<evidence type="ECO:0000305" key="4"/>
<proteinExistence type="inferred from homology"/>
<feature type="chain" id="PRO_0000218590" description="Autophagy protein 16">
    <location>
        <begin position="1"/>
        <end position="183"/>
    </location>
</feature>
<feature type="coiled-coil region" evidence="3">
    <location>
        <begin position="44"/>
        <end position="183"/>
    </location>
</feature>
<dbReference type="EMBL" id="CR382139">
    <property type="protein sequence ID" value="CAG90968.1"/>
    <property type="molecule type" value="Genomic_DNA"/>
</dbReference>
<dbReference type="RefSeq" id="XP_462458.1">
    <property type="nucleotide sequence ID" value="XM_462458.1"/>
</dbReference>
<dbReference type="SMR" id="Q6BH63"/>
<dbReference type="STRING" id="284592.Q6BH63"/>
<dbReference type="GeneID" id="2905407"/>
<dbReference type="KEGG" id="dha:DEHA2G21054g"/>
<dbReference type="VEuPathDB" id="FungiDB:DEHA2G21054g"/>
<dbReference type="eggNOG" id="ENOG502S5CU">
    <property type="taxonomic scope" value="Eukaryota"/>
</dbReference>
<dbReference type="HOGENOM" id="CLU_117720_0_0_1"/>
<dbReference type="InParanoid" id="Q6BH63"/>
<dbReference type="OMA" id="NHEIDAR"/>
<dbReference type="OrthoDB" id="8949486at2759"/>
<dbReference type="Proteomes" id="UP000000599">
    <property type="component" value="Chromosome G"/>
</dbReference>
<dbReference type="GO" id="GO:0034045">
    <property type="term" value="C:phagophore assembly site membrane"/>
    <property type="evidence" value="ECO:0007669"/>
    <property type="project" value="UniProtKB-SubCell"/>
</dbReference>
<dbReference type="GO" id="GO:0006914">
    <property type="term" value="P:autophagy"/>
    <property type="evidence" value="ECO:0007669"/>
    <property type="project" value="UniProtKB-KW"/>
</dbReference>
<dbReference type="GO" id="GO:0015031">
    <property type="term" value="P:protein transport"/>
    <property type="evidence" value="ECO:0007669"/>
    <property type="project" value="UniProtKB-KW"/>
</dbReference>
<dbReference type="CDD" id="cd22887">
    <property type="entry name" value="Atg16_CCD"/>
    <property type="match status" value="1"/>
</dbReference>
<dbReference type="Gene3D" id="1.20.5.170">
    <property type="match status" value="1"/>
</dbReference>
<dbReference type="InterPro" id="IPR013923">
    <property type="entry name" value="Autophagy-rel_prot_16_dom"/>
</dbReference>
<dbReference type="Pfam" id="PF08614">
    <property type="entry name" value="ATG16"/>
    <property type="match status" value="1"/>
</dbReference>
<reference key="1">
    <citation type="journal article" date="2004" name="Nature">
        <title>Genome evolution in yeasts.</title>
        <authorList>
            <person name="Dujon B."/>
            <person name="Sherman D."/>
            <person name="Fischer G."/>
            <person name="Durrens P."/>
            <person name="Casaregola S."/>
            <person name="Lafontaine I."/>
            <person name="de Montigny J."/>
            <person name="Marck C."/>
            <person name="Neuveglise C."/>
            <person name="Talla E."/>
            <person name="Goffard N."/>
            <person name="Frangeul L."/>
            <person name="Aigle M."/>
            <person name="Anthouard V."/>
            <person name="Babour A."/>
            <person name="Barbe V."/>
            <person name="Barnay S."/>
            <person name="Blanchin S."/>
            <person name="Beckerich J.-M."/>
            <person name="Beyne E."/>
            <person name="Bleykasten C."/>
            <person name="Boisrame A."/>
            <person name="Boyer J."/>
            <person name="Cattolico L."/>
            <person name="Confanioleri F."/>
            <person name="de Daruvar A."/>
            <person name="Despons L."/>
            <person name="Fabre E."/>
            <person name="Fairhead C."/>
            <person name="Ferry-Dumazet H."/>
            <person name="Groppi A."/>
            <person name="Hantraye F."/>
            <person name="Hennequin C."/>
            <person name="Jauniaux N."/>
            <person name="Joyet P."/>
            <person name="Kachouri R."/>
            <person name="Kerrest A."/>
            <person name="Koszul R."/>
            <person name="Lemaire M."/>
            <person name="Lesur I."/>
            <person name="Ma L."/>
            <person name="Muller H."/>
            <person name="Nicaud J.-M."/>
            <person name="Nikolski M."/>
            <person name="Oztas S."/>
            <person name="Ozier-Kalogeropoulos O."/>
            <person name="Pellenz S."/>
            <person name="Potier S."/>
            <person name="Richard G.-F."/>
            <person name="Straub M.-L."/>
            <person name="Suleau A."/>
            <person name="Swennen D."/>
            <person name="Tekaia F."/>
            <person name="Wesolowski-Louvel M."/>
            <person name="Westhof E."/>
            <person name="Wirth B."/>
            <person name="Zeniou-Meyer M."/>
            <person name="Zivanovic Y."/>
            <person name="Bolotin-Fukuhara M."/>
            <person name="Thierry A."/>
            <person name="Bouchier C."/>
            <person name="Caudron B."/>
            <person name="Scarpelli C."/>
            <person name="Gaillardin C."/>
            <person name="Weissenbach J."/>
            <person name="Wincker P."/>
            <person name="Souciet J.-L."/>
        </authorList>
    </citation>
    <scope>NUCLEOTIDE SEQUENCE [LARGE SCALE GENOMIC DNA]</scope>
    <source>
        <strain>ATCC 36239 / CBS 767 / BCRC 21394 / JCM 1990 / NBRC 0083 / IGC 2968</strain>
    </source>
</reference>
<sequence>MSDDTEWSEDILNRLNVRDQYEKKDSRYFKAFSQLSQEARTNDQASNNDKSIEYNKLLKENNQLKKDNEILTTSLNQTTISLEKSDLKINQLLKSQDQLERHNTSLNNKIKHLNLEIIEKNKSVEILNDELLLNEIQTNVLNDKITRLSDENKKLVERWIEKAKSDAEKLNDANEFLESVNRK</sequence>
<accession>Q6BH63</accession>
<name>ATG16_DEBHA</name>
<comment type="function">
    <text evidence="1">Stabilizes the ATG5-ATG12 conjugate which is necessary for autophagy. The ATG5-ATG12/ATG16 complex is required for efficient promotion of ATG8-conjugation to phosphatidylethanolamine and ATG8 localization to the pre-autophagosomal structure (PAS). Also recruits ATG3 to the PAS. Involved in endoplasmic reticulum-specific autophagic process and is essential for the survival of cells subjected to severe ER stress (By similarity).</text>
</comment>
<comment type="subunit">
    <text evidence="1">Homodimer (By similarity). Part of the ATG5-ATG12/ATG16 complex. Several units of each may be present in this complex (By similarity).</text>
</comment>
<comment type="subcellular location">
    <subcellularLocation>
        <location evidence="2">Preautophagosomal structure membrane</location>
        <topology evidence="2">Peripheral membrane protein</topology>
    </subcellularLocation>
</comment>
<comment type="similarity">
    <text evidence="4">Belongs to the ATG16 family.</text>
</comment>
<gene>
    <name type="primary">ATG16</name>
    <name type="ordered locus">DEHA2G21054g</name>
</gene>
<protein>
    <recommendedName>
        <fullName>Autophagy protein 16</fullName>
    </recommendedName>
</protein>